<sequence length="115" mass="13676">MHRLRAYCVISALSDTLLAFCTSSAELYEGPLRQYRIKATQIRRWFGRRACRTIPIRHDPVECPEPRSCPCSYHSRLWSKRLGRTQISRRLQTARRLNPERSTAWSYLARQVLYY</sequence>
<dbReference type="EMBL" id="Z72961">
    <property type="protein sequence ID" value="CAA97202.1"/>
    <property type="molecule type" value="Genomic_DNA"/>
</dbReference>
<dbReference type="EMBL" id="AY693313">
    <property type="protein sequence ID" value="AAT93332.1"/>
    <property type="molecule type" value="Genomic_DNA"/>
</dbReference>
<dbReference type="EMBL" id="M64994">
    <property type="protein sequence ID" value="AAA34591.1"/>
    <property type="molecule type" value="Genomic_DNA"/>
</dbReference>
<dbReference type="PIR" id="S64490">
    <property type="entry name" value="S64490"/>
</dbReference>
<dbReference type="SMR" id="P32475"/>
<dbReference type="STRING" id="4932.YGR176W"/>
<dbReference type="PaxDb" id="4932-YGR176W"/>
<dbReference type="EnsemblFungi" id="YGR176W_mRNA">
    <property type="protein sequence ID" value="YGR176W"/>
    <property type="gene ID" value="YGR176W"/>
</dbReference>
<dbReference type="AGR" id="SGD:S000003408"/>
<dbReference type="SGD" id="S000003408">
    <property type="gene designation" value="YGR176W"/>
</dbReference>
<dbReference type="HOGENOM" id="CLU_2110841_0_0_1"/>
<protein>
    <recommendedName>
        <fullName>Putative uncharacterized protein YGR176W</fullName>
    </recommendedName>
</protein>
<gene>
    <name type="ordered locus">YGR176W</name>
</gene>
<feature type="chain" id="PRO_0000202839" description="Putative uncharacterized protein YGR176W">
    <location>
        <begin position="1"/>
        <end position="115"/>
    </location>
</feature>
<feature type="sequence conflict" description="In Ref. 4; AAA34591." evidence="1" ref="4">
    <original>IRHD</original>
    <variation>NSPR</variation>
    <location>
        <begin position="56"/>
        <end position="59"/>
    </location>
</feature>
<name>YG3Z_YEAST</name>
<organism>
    <name type="scientific">Saccharomyces cerevisiae (strain ATCC 204508 / S288c)</name>
    <name type="common">Baker's yeast</name>
    <dbReference type="NCBI Taxonomy" id="559292"/>
    <lineage>
        <taxon>Eukaryota</taxon>
        <taxon>Fungi</taxon>
        <taxon>Dikarya</taxon>
        <taxon>Ascomycota</taxon>
        <taxon>Saccharomycotina</taxon>
        <taxon>Saccharomycetes</taxon>
        <taxon>Saccharomycetales</taxon>
        <taxon>Saccharomycetaceae</taxon>
        <taxon>Saccharomyces</taxon>
    </lineage>
</organism>
<comment type="miscellaneous">
    <text evidence="1">Partially overlaps ATF2.</text>
</comment>
<comment type="caution">
    <text evidence="2">Product of a dubious gene prediction unlikely to encode a functional protein. Because of that it is not part of the S.cerevisiae S288c complete/reference proteome set.</text>
</comment>
<reference key="1">
    <citation type="journal article" date="1997" name="Nature">
        <title>The nucleotide sequence of Saccharomyces cerevisiae chromosome VII.</title>
        <authorList>
            <person name="Tettelin H."/>
            <person name="Agostoni-Carbone M.L."/>
            <person name="Albermann K."/>
            <person name="Albers M."/>
            <person name="Arroyo J."/>
            <person name="Backes U."/>
            <person name="Barreiros T."/>
            <person name="Bertani I."/>
            <person name="Bjourson A.J."/>
            <person name="Brueckner M."/>
            <person name="Bruschi C.V."/>
            <person name="Carignani G."/>
            <person name="Castagnoli L."/>
            <person name="Cerdan E."/>
            <person name="Clemente M.L."/>
            <person name="Coblenz A."/>
            <person name="Coglievina M."/>
            <person name="Coissac E."/>
            <person name="Defoor E."/>
            <person name="Del Bino S."/>
            <person name="Delius H."/>
            <person name="Delneri D."/>
            <person name="de Wergifosse P."/>
            <person name="Dujon B."/>
            <person name="Durand P."/>
            <person name="Entian K.-D."/>
            <person name="Eraso P."/>
            <person name="Escribano V."/>
            <person name="Fabiani L."/>
            <person name="Fartmann B."/>
            <person name="Feroli F."/>
            <person name="Feuermann M."/>
            <person name="Frontali L."/>
            <person name="Garcia-Gonzalez M."/>
            <person name="Garcia-Saez M.I."/>
            <person name="Goffeau A."/>
            <person name="Guerreiro P."/>
            <person name="Hani J."/>
            <person name="Hansen M."/>
            <person name="Hebling U."/>
            <person name="Hernandez K."/>
            <person name="Heumann K."/>
            <person name="Hilger F."/>
            <person name="Hofmann B."/>
            <person name="Indge K.J."/>
            <person name="James C.M."/>
            <person name="Klima R."/>
            <person name="Koetter P."/>
            <person name="Kramer B."/>
            <person name="Kramer W."/>
            <person name="Lauquin G."/>
            <person name="Leuther H."/>
            <person name="Louis E.J."/>
            <person name="Maillier E."/>
            <person name="Marconi A."/>
            <person name="Martegani E."/>
            <person name="Mazon M.J."/>
            <person name="Mazzoni C."/>
            <person name="McReynolds A.D.K."/>
            <person name="Melchioretto P."/>
            <person name="Mewes H.-W."/>
            <person name="Minenkova O."/>
            <person name="Mueller-Auer S."/>
            <person name="Nawrocki A."/>
            <person name="Netter P."/>
            <person name="Neu R."/>
            <person name="Nombela C."/>
            <person name="Oliver S.G."/>
            <person name="Panzeri L."/>
            <person name="Paoluzi S."/>
            <person name="Plevani P."/>
            <person name="Portetelle D."/>
            <person name="Portillo F."/>
            <person name="Potier S."/>
            <person name="Purnelle B."/>
            <person name="Rieger M."/>
            <person name="Riles L."/>
            <person name="Rinaldi T."/>
            <person name="Robben J."/>
            <person name="Rodrigues-Pousada C."/>
            <person name="Rodriguez-Belmonte E."/>
            <person name="Rodriguez-Torres A.M."/>
            <person name="Rose M."/>
            <person name="Ruzzi M."/>
            <person name="Saliola M."/>
            <person name="Sanchez-Perez M."/>
            <person name="Schaefer B."/>
            <person name="Schaefer M."/>
            <person name="Scharfe M."/>
            <person name="Schmidheini T."/>
            <person name="Schreer A."/>
            <person name="Skala J."/>
            <person name="Souciet J.-L."/>
            <person name="Steensma H.Y."/>
            <person name="Talla E."/>
            <person name="Thierry A."/>
            <person name="Vandenbol M."/>
            <person name="van der Aart Q.J.M."/>
            <person name="Van Dyck L."/>
            <person name="Vanoni M."/>
            <person name="Verhasselt P."/>
            <person name="Voet M."/>
            <person name="Volckaert G."/>
            <person name="Wambutt R."/>
            <person name="Watson M.D."/>
            <person name="Weber N."/>
            <person name="Wedler E."/>
            <person name="Wedler H."/>
            <person name="Wipfli P."/>
            <person name="Wolf K."/>
            <person name="Wright L.F."/>
            <person name="Zaccaria P."/>
            <person name="Zimmermann M."/>
            <person name="Zollner A."/>
            <person name="Kleine K."/>
        </authorList>
    </citation>
    <scope>NUCLEOTIDE SEQUENCE [LARGE SCALE GENOMIC DNA]</scope>
    <source>
        <strain>ATCC 204508 / S288c</strain>
    </source>
</reference>
<reference key="2">
    <citation type="journal article" date="2014" name="G3 (Bethesda)">
        <title>The reference genome sequence of Saccharomyces cerevisiae: Then and now.</title>
        <authorList>
            <person name="Engel S.R."/>
            <person name="Dietrich F.S."/>
            <person name="Fisk D.G."/>
            <person name="Binkley G."/>
            <person name="Balakrishnan R."/>
            <person name="Costanzo M.C."/>
            <person name="Dwight S.S."/>
            <person name="Hitz B.C."/>
            <person name="Karra K."/>
            <person name="Nash R.S."/>
            <person name="Weng S."/>
            <person name="Wong E.D."/>
            <person name="Lloyd P."/>
            <person name="Skrzypek M.S."/>
            <person name="Miyasato S.R."/>
            <person name="Simison M."/>
            <person name="Cherry J.M."/>
        </authorList>
    </citation>
    <scope>GENOME REANNOTATION</scope>
    <source>
        <strain>ATCC 204508 / S288c</strain>
    </source>
</reference>
<reference key="3">
    <citation type="journal article" date="2007" name="Genome Res.">
        <title>Approaching a complete repository of sequence-verified protein-encoding clones for Saccharomyces cerevisiae.</title>
        <authorList>
            <person name="Hu Y."/>
            <person name="Rolfs A."/>
            <person name="Bhullar B."/>
            <person name="Murthy T.V.S."/>
            <person name="Zhu C."/>
            <person name="Berger M.F."/>
            <person name="Camargo A.A."/>
            <person name="Kelley F."/>
            <person name="McCarron S."/>
            <person name="Jepson D."/>
            <person name="Richardson A."/>
            <person name="Raphael J."/>
            <person name="Moreira D."/>
            <person name="Taycher E."/>
            <person name="Zuo D."/>
            <person name="Mohr S."/>
            <person name="Kane M.F."/>
            <person name="Williamson J."/>
            <person name="Simpson A.J.G."/>
            <person name="Bulyk M.L."/>
            <person name="Harlow E."/>
            <person name="Marsischky G."/>
            <person name="Kolodner R.D."/>
            <person name="LaBaer J."/>
        </authorList>
    </citation>
    <scope>NUCLEOTIDE SEQUENCE [GENOMIC DNA]</scope>
    <source>
        <strain>ATCC 204508 / S288c</strain>
    </source>
</reference>
<reference key="4">
    <citation type="journal article" date="1991" name="Gene">
        <title>The gene encoding squalene epoxidase from Saccharomyces cerevisiae: cloning and characterization.</title>
        <authorList>
            <person name="Jandrositz A."/>
            <person name="Turnowsky F."/>
            <person name="Hoegenauer G."/>
        </authorList>
    </citation>
    <scope>NUCLEOTIDE SEQUENCE [GENOMIC DNA] OF 1-59</scope>
</reference>
<evidence type="ECO:0000305" key="1"/>
<evidence type="ECO:0000305" key="2">
    <source>
    </source>
</evidence>
<accession>P32475</accession>
<proteinExistence type="uncertain"/>